<comment type="function">
    <text evidence="1">ATP-dependent specificity component of the Clp protease. It directs the protease to specific substrates. Can perform chaperone functions in the absence of ClpP.</text>
</comment>
<comment type="subunit">
    <text evidence="1">Component of the ClpX-ClpP complex. Forms a hexameric ring that, in the presence of ATP, binds to fourteen ClpP subunits assembled into a disk-like structure with a central cavity, resembling the structure of eukaryotic proteasomes.</text>
</comment>
<comment type="similarity">
    <text evidence="1">Belongs to the ClpX chaperone family.</text>
</comment>
<protein>
    <recommendedName>
        <fullName evidence="1">ATP-dependent Clp protease ATP-binding subunit ClpX</fullName>
    </recommendedName>
</protein>
<evidence type="ECO:0000255" key="1">
    <source>
        <dbReference type="HAMAP-Rule" id="MF_00175"/>
    </source>
</evidence>
<evidence type="ECO:0000255" key="2">
    <source>
        <dbReference type="PROSITE-ProRule" id="PRU01250"/>
    </source>
</evidence>
<name>CLPX_RHOBA</name>
<sequence>MNAEYGVGARLPAKTSLIVIRRRRGTSPQCWTHKSKESCMPTKETSNSRRGSAATKKNAFCSFCRKSYRDVGPLVEGPGDVYICAECIDLCQSILDQEQRRRGPSKSLFSDIPSPRSIVEHLDNYVIGQGSAKRVLAVAVHNHYKRLSNGADGSNGEVEIEKSNILLAGPTGSGKTLLARSLARMLNVPFAIGDATTLTEAGYVGEDVENLLLKLLHAADFDVEAAQRGILYIDEVDKIGSTNGNVSITRDVSGEGVQQSLLKMLEGTVANVPPQGGRKHPEQQYIQLDTSNILFICGGTFVGIEEIIRRRLGHRTLGFGEGANVRNEQTPGELVAQVQTEDILKFGLIPELVGRMPVISYLQPLDLEGLIQVLTEPKNSLVKQYQALFAMENCELEFTEEALHAIAKKAVDKGVGARGLRGIMEDVMLDIMYDLPEQEAGKVYTIDEAIVTGKQDLFKMPTTKSA</sequence>
<feature type="chain" id="PRO_0000160410" description="ATP-dependent Clp protease ATP-binding subunit ClpX">
    <location>
        <begin position="1"/>
        <end position="466"/>
    </location>
</feature>
<feature type="domain" description="ClpX-type ZB" evidence="2">
    <location>
        <begin position="49"/>
        <end position="103"/>
    </location>
</feature>
<feature type="binding site" evidence="2">
    <location>
        <position position="61"/>
    </location>
    <ligand>
        <name>Zn(2+)</name>
        <dbReference type="ChEBI" id="CHEBI:29105"/>
    </ligand>
</feature>
<feature type="binding site" evidence="2">
    <location>
        <position position="64"/>
    </location>
    <ligand>
        <name>Zn(2+)</name>
        <dbReference type="ChEBI" id="CHEBI:29105"/>
    </ligand>
</feature>
<feature type="binding site" evidence="2">
    <location>
        <position position="84"/>
    </location>
    <ligand>
        <name>Zn(2+)</name>
        <dbReference type="ChEBI" id="CHEBI:29105"/>
    </ligand>
</feature>
<feature type="binding site" evidence="2">
    <location>
        <position position="87"/>
    </location>
    <ligand>
        <name>Zn(2+)</name>
        <dbReference type="ChEBI" id="CHEBI:29105"/>
    </ligand>
</feature>
<feature type="binding site" evidence="1">
    <location>
        <begin position="170"/>
        <end position="177"/>
    </location>
    <ligand>
        <name>ATP</name>
        <dbReference type="ChEBI" id="CHEBI:30616"/>
    </ligand>
</feature>
<gene>
    <name evidence="1" type="primary">clpX</name>
    <name type="ordered locus">RB9927</name>
</gene>
<organism>
    <name type="scientific">Rhodopirellula baltica (strain DSM 10527 / NCIMB 13988 / SH1)</name>
    <dbReference type="NCBI Taxonomy" id="243090"/>
    <lineage>
        <taxon>Bacteria</taxon>
        <taxon>Pseudomonadati</taxon>
        <taxon>Planctomycetota</taxon>
        <taxon>Planctomycetia</taxon>
        <taxon>Pirellulales</taxon>
        <taxon>Pirellulaceae</taxon>
        <taxon>Rhodopirellula</taxon>
    </lineage>
</organism>
<proteinExistence type="inferred from homology"/>
<dbReference type="EMBL" id="BX294150">
    <property type="protein sequence ID" value="CAD76535.1"/>
    <property type="molecule type" value="Genomic_DNA"/>
</dbReference>
<dbReference type="RefSeq" id="NP_869149.1">
    <property type="nucleotide sequence ID" value="NC_005027.1"/>
</dbReference>
<dbReference type="SMR" id="Q7UKU7"/>
<dbReference type="FunCoup" id="Q7UKU7">
    <property type="interactions" value="395"/>
</dbReference>
<dbReference type="STRING" id="243090.RB9927"/>
<dbReference type="EnsemblBacteria" id="CAD76535">
    <property type="protein sequence ID" value="CAD76535"/>
    <property type="gene ID" value="RB9927"/>
</dbReference>
<dbReference type="KEGG" id="rba:RB9927"/>
<dbReference type="PATRIC" id="fig|243090.15.peg.4779"/>
<dbReference type="eggNOG" id="COG1219">
    <property type="taxonomic scope" value="Bacteria"/>
</dbReference>
<dbReference type="HOGENOM" id="CLU_014218_8_2_0"/>
<dbReference type="InParanoid" id="Q7UKU7"/>
<dbReference type="OrthoDB" id="9804062at2"/>
<dbReference type="Proteomes" id="UP000001025">
    <property type="component" value="Chromosome"/>
</dbReference>
<dbReference type="GO" id="GO:0009376">
    <property type="term" value="C:HslUV protease complex"/>
    <property type="evidence" value="ECO:0000318"/>
    <property type="project" value="GO_Central"/>
</dbReference>
<dbReference type="GO" id="GO:0005524">
    <property type="term" value="F:ATP binding"/>
    <property type="evidence" value="ECO:0000318"/>
    <property type="project" value="GO_Central"/>
</dbReference>
<dbReference type="GO" id="GO:0016887">
    <property type="term" value="F:ATP hydrolysis activity"/>
    <property type="evidence" value="ECO:0000318"/>
    <property type="project" value="GO_Central"/>
</dbReference>
<dbReference type="GO" id="GO:0140662">
    <property type="term" value="F:ATP-dependent protein folding chaperone"/>
    <property type="evidence" value="ECO:0007669"/>
    <property type="project" value="InterPro"/>
</dbReference>
<dbReference type="GO" id="GO:0046983">
    <property type="term" value="F:protein dimerization activity"/>
    <property type="evidence" value="ECO:0007669"/>
    <property type="project" value="InterPro"/>
</dbReference>
<dbReference type="GO" id="GO:0051082">
    <property type="term" value="F:unfolded protein binding"/>
    <property type="evidence" value="ECO:0007669"/>
    <property type="project" value="UniProtKB-UniRule"/>
</dbReference>
<dbReference type="GO" id="GO:0008270">
    <property type="term" value="F:zinc ion binding"/>
    <property type="evidence" value="ECO:0007669"/>
    <property type="project" value="InterPro"/>
</dbReference>
<dbReference type="GO" id="GO:0051301">
    <property type="term" value="P:cell division"/>
    <property type="evidence" value="ECO:0000318"/>
    <property type="project" value="GO_Central"/>
</dbReference>
<dbReference type="GO" id="GO:0051603">
    <property type="term" value="P:proteolysis involved in protein catabolic process"/>
    <property type="evidence" value="ECO:0000318"/>
    <property type="project" value="GO_Central"/>
</dbReference>
<dbReference type="CDD" id="cd19497">
    <property type="entry name" value="RecA-like_ClpX"/>
    <property type="match status" value="1"/>
</dbReference>
<dbReference type="FunFam" id="1.10.8.60:FF:000002">
    <property type="entry name" value="ATP-dependent Clp protease ATP-binding subunit ClpX"/>
    <property type="match status" value="1"/>
</dbReference>
<dbReference type="FunFam" id="3.40.50.300:FF:000005">
    <property type="entry name" value="ATP-dependent Clp protease ATP-binding subunit ClpX"/>
    <property type="match status" value="1"/>
</dbReference>
<dbReference type="Gene3D" id="1.10.8.60">
    <property type="match status" value="1"/>
</dbReference>
<dbReference type="Gene3D" id="6.20.220.10">
    <property type="entry name" value="ClpX chaperone, C4-type zinc finger domain"/>
    <property type="match status" value="1"/>
</dbReference>
<dbReference type="Gene3D" id="3.40.50.300">
    <property type="entry name" value="P-loop containing nucleotide triphosphate hydrolases"/>
    <property type="match status" value="1"/>
</dbReference>
<dbReference type="HAMAP" id="MF_00175">
    <property type="entry name" value="ClpX"/>
    <property type="match status" value="1"/>
</dbReference>
<dbReference type="InterPro" id="IPR003593">
    <property type="entry name" value="AAA+_ATPase"/>
</dbReference>
<dbReference type="InterPro" id="IPR050052">
    <property type="entry name" value="ATP-dep_Clp_protease_ClpX"/>
</dbReference>
<dbReference type="InterPro" id="IPR003959">
    <property type="entry name" value="ATPase_AAA_core"/>
</dbReference>
<dbReference type="InterPro" id="IPR019489">
    <property type="entry name" value="Clp_ATPase_C"/>
</dbReference>
<dbReference type="InterPro" id="IPR004487">
    <property type="entry name" value="Clp_protease_ATP-bd_su_ClpX"/>
</dbReference>
<dbReference type="InterPro" id="IPR046425">
    <property type="entry name" value="ClpX_bact"/>
</dbReference>
<dbReference type="InterPro" id="IPR027417">
    <property type="entry name" value="P-loop_NTPase"/>
</dbReference>
<dbReference type="InterPro" id="IPR010603">
    <property type="entry name" value="Znf_CppX_C4"/>
</dbReference>
<dbReference type="InterPro" id="IPR038366">
    <property type="entry name" value="Znf_CppX_C4_sf"/>
</dbReference>
<dbReference type="NCBIfam" id="TIGR00382">
    <property type="entry name" value="clpX"/>
    <property type="match status" value="1"/>
</dbReference>
<dbReference type="NCBIfam" id="NF003745">
    <property type="entry name" value="PRK05342.1"/>
    <property type="match status" value="1"/>
</dbReference>
<dbReference type="PANTHER" id="PTHR48102:SF7">
    <property type="entry name" value="ATP-DEPENDENT CLP PROTEASE ATP-BINDING SUBUNIT CLPX-LIKE, MITOCHONDRIAL"/>
    <property type="match status" value="1"/>
</dbReference>
<dbReference type="PANTHER" id="PTHR48102">
    <property type="entry name" value="ATP-DEPENDENT CLP PROTEASE ATP-BINDING SUBUNIT CLPX-LIKE, MITOCHONDRIAL-RELATED"/>
    <property type="match status" value="1"/>
</dbReference>
<dbReference type="Pfam" id="PF07724">
    <property type="entry name" value="AAA_2"/>
    <property type="match status" value="1"/>
</dbReference>
<dbReference type="Pfam" id="PF10431">
    <property type="entry name" value="ClpB_D2-small"/>
    <property type="match status" value="1"/>
</dbReference>
<dbReference type="Pfam" id="PF06689">
    <property type="entry name" value="zf-C4_ClpX"/>
    <property type="match status" value="1"/>
</dbReference>
<dbReference type="SMART" id="SM00382">
    <property type="entry name" value="AAA"/>
    <property type="match status" value="1"/>
</dbReference>
<dbReference type="SMART" id="SM01086">
    <property type="entry name" value="ClpB_D2-small"/>
    <property type="match status" value="1"/>
</dbReference>
<dbReference type="SMART" id="SM00994">
    <property type="entry name" value="zf-C4_ClpX"/>
    <property type="match status" value="1"/>
</dbReference>
<dbReference type="SUPFAM" id="SSF57716">
    <property type="entry name" value="Glucocorticoid receptor-like (DNA-binding domain)"/>
    <property type="match status" value="1"/>
</dbReference>
<dbReference type="SUPFAM" id="SSF52540">
    <property type="entry name" value="P-loop containing nucleoside triphosphate hydrolases"/>
    <property type="match status" value="1"/>
</dbReference>
<dbReference type="PROSITE" id="PS51902">
    <property type="entry name" value="CLPX_ZB"/>
    <property type="match status" value="1"/>
</dbReference>
<accession>Q7UKU7</accession>
<reference key="1">
    <citation type="journal article" date="2003" name="Proc. Natl. Acad. Sci. U.S.A.">
        <title>Complete genome sequence of the marine planctomycete Pirellula sp. strain 1.</title>
        <authorList>
            <person name="Gloeckner F.O."/>
            <person name="Kube M."/>
            <person name="Bauer M."/>
            <person name="Teeling H."/>
            <person name="Lombardot T."/>
            <person name="Ludwig W."/>
            <person name="Gade D."/>
            <person name="Beck A."/>
            <person name="Borzym K."/>
            <person name="Heitmann K."/>
            <person name="Rabus R."/>
            <person name="Schlesner H."/>
            <person name="Amann R."/>
            <person name="Reinhardt R."/>
        </authorList>
    </citation>
    <scope>NUCLEOTIDE SEQUENCE [LARGE SCALE GENOMIC DNA]</scope>
    <source>
        <strain>DSM 10527 / NCIMB 13988 / SH1</strain>
    </source>
</reference>
<keyword id="KW-0067">ATP-binding</keyword>
<keyword id="KW-0143">Chaperone</keyword>
<keyword id="KW-0479">Metal-binding</keyword>
<keyword id="KW-0547">Nucleotide-binding</keyword>
<keyword id="KW-1185">Reference proteome</keyword>
<keyword id="KW-0862">Zinc</keyword>